<reference key="1">
    <citation type="submission" date="2004-07" db="EMBL/GenBank/DDBJ databases">
        <authorList>
            <consortium name="NIH - Zebrafish Gene Collection (ZGC) project"/>
        </authorList>
    </citation>
    <scope>NUCLEOTIDE SEQUENCE [LARGE SCALE MRNA]</scope>
</reference>
<accession>Q6DBR0</accession>
<feature type="transit peptide" description="Mitochondrion" evidence="2">
    <location>
        <begin position="1"/>
        <end position="12"/>
    </location>
</feature>
<feature type="chain" id="PRO_0000300828" description="Pseudouridylate synthase RPUSD4, mitochondrial">
    <location>
        <begin position="13"/>
        <end position="358"/>
    </location>
</feature>
<keyword id="KW-0963">Cytoplasm</keyword>
<keyword id="KW-0413">Isomerase</keyword>
<keyword id="KW-0496">Mitochondrion</keyword>
<keyword id="KW-0507">mRNA processing</keyword>
<keyword id="KW-0508">mRNA splicing</keyword>
<keyword id="KW-0539">Nucleus</keyword>
<keyword id="KW-1185">Reference proteome</keyword>
<keyword id="KW-0698">rRNA processing</keyword>
<keyword id="KW-0809">Transit peptide</keyword>
<keyword id="KW-0819">tRNA processing</keyword>
<comment type="function">
    <text evidence="1">Catalyzes uridine to pseudouridine isomerization (pseudouridylation) of different mitochondrial RNA substrates. Acts on position 1397 in 16S mitochondrial ribosomal RNA (16S mt-rRNA). This modification is required for the assembly of 16S mt-rRNA into a functional mitochondrial ribosome. Acts on position 39 in mitochondrial tRNA(Phe). Also catalyzes pseudouridylation of mRNAs in nucleus: acts as a regulator of pre-mRNA splicing by mediating pseudouridylation of pre-mRNAs at locations associated with alternatively spliced regions. Pseudouridylation of pre-mRNAs near splice sites directly regulates mRNA splicing and mRNA 3'-end processing.</text>
</comment>
<comment type="catalytic activity">
    <reaction evidence="1">
        <text>uridine in 5S rRNA = pseudouridine in 5S rRNA</text>
        <dbReference type="Rhea" id="RHEA:47036"/>
        <dbReference type="Rhea" id="RHEA-COMP:11730"/>
        <dbReference type="Rhea" id="RHEA-COMP:11731"/>
        <dbReference type="ChEBI" id="CHEBI:65314"/>
        <dbReference type="ChEBI" id="CHEBI:65315"/>
    </reaction>
</comment>
<comment type="catalytic activity">
    <reaction evidence="1">
        <text>a uridine in tRNA = a pseudouridine in tRNA</text>
        <dbReference type="Rhea" id="RHEA:54572"/>
        <dbReference type="Rhea" id="RHEA-COMP:13339"/>
        <dbReference type="Rhea" id="RHEA-COMP:13934"/>
        <dbReference type="ChEBI" id="CHEBI:65314"/>
        <dbReference type="ChEBI" id="CHEBI:65315"/>
    </reaction>
</comment>
<comment type="catalytic activity">
    <reaction evidence="1">
        <text>a uridine in mRNA = a pseudouridine in mRNA</text>
        <dbReference type="Rhea" id="RHEA:56644"/>
        <dbReference type="Rhea" id="RHEA-COMP:14658"/>
        <dbReference type="Rhea" id="RHEA-COMP:14659"/>
        <dbReference type="ChEBI" id="CHEBI:65314"/>
        <dbReference type="ChEBI" id="CHEBI:65315"/>
    </reaction>
</comment>
<comment type="subcellular location">
    <subcellularLocation>
        <location evidence="1">Mitochondrion matrix</location>
    </subcellularLocation>
    <subcellularLocation>
        <location evidence="1">Nucleus</location>
    </subcellularLocation>
    <subcellularLocation>
        <location evidence="1">Cytoplasm</location>
    </subcellularLocation>
    <text evidence="1">Mainly localizes to mitochondrion. Localizes to mitochondrial RNA granules, platforms for post-transcriptional RNA modification and ribosome assembly. Also found in nucleus and cytoplasm.</text>
</comment>
<comment type="similarity">
    <text evidence="4">Belongs to the pseudouridine synthase RluA family.</text>
</comment>
<sequence length="358" mass="40133">MRHAREVTFARLMRTFAAVSDTQTVASKHKTAPKAADIANRLRKEKEKEKDDKNEVPVSPLQSRVNELKQFSQQLQSVHPSVFAKALYRSSLYEDQNIIAINKPYDVPLHNINGIRNSIAECLPLLAKITDNMRPGSQLHLCHKLEKETTGVLILAKTEEAAEHVQTLIQSHKVEMKYLAITVGVPVPSEGVIDIPVIERAVVGPQPHFKMALSPLFKVNEDGDGVTRVRAHRQAHAAVTRYQVLDNTSGCSLVELQPLTGVKNQLRVHMALALTCPILGDHKYSHWSKLAPQKLPEGTLRRLGLVQSKTRYLPLHLHSRRIVLPGFKGHRDITVSCPLPKYFINALKRLEIPLPAKE</sequence>
<proteinExistence type="evidence at transcript level"/>
<evidence type="ECO:0000250" key="1">
    <source>
        <dbReference type="UniProtKB" id="Q96CM3"/>
    </source>
</evidence>
<evidence type="ECO:0000255" key="2"/>
<evidence type="ECO:0000303" key="3">
    <source ref="1"/>
</evidence>
<evidence type="ECO:0000305" key="4"/>
<protein>
    <recommendedName>
        <fullName evidence="4">Pseudouridylate synthase RPUSD4, mitochondrial</fullName>
        <ecNumber evidence="1">5.4.99.-</ecNumber>
    </recommendedName>
    <alternativeName>
        <fullName evidence="4">RNA pseudouridylate synthase domain-containing protein 4</fullName>
    </alternativeName>
</protein>
<dbReference type="EC" id="5.4.99.-" evidence="1"/>
<dbReference type="EMBL" id="BC078405">
    <property type="protein sequence ID" value="AAH78405.1"/>
    <property type="molecule type" value="mRNA"/>
</dbReference>
<dbReference type="RefSeq" id="NP_001003495.1">
    <property type="nucleotide sequence ID" value="NM_001003495.1"/>
</dbReference>
<dbReference type="SMR" id="Q6DBR0"/>
<dbReference type="FunCoup" id="Q6DBR0">
    <property type="interactions" value="1067"/>
</dbReference>
<dbReference type="STRING" id="7955.ENSDARP00000011603"/>
<dbReference type="PaxDb" id="7955-ENSDARP00000011603"/>
<dbReference type="Ensembl" id="ENSDART00000020283">
    <property type="protein sequence ID" value="ENSDARP00000011603"/>
    <property type="gene ID" value="ENSDARG00000012674"/>
</dbReference>
<dbReference type="Ensembl" id="ENSDART00000179986">
    <property type="protein sequence ID" value="ENSDARP00000152597"/>
    <property type="gene ID" value="ENSDARG00000012674"/>
</dbReference>
<dbReference type="Ensembl" id="ENSDART00000188329">
    <property type="protein sequence ID" value="ENSDARP00000144970"/>
    <property type="gene ID" value="ENSDARG00000012674"/>
</dbReference>
<dbReference type="GeneID" id="445101"/>
<dbReference type="KEGG" id="dre:445101"/>
<dbReference type="AGR" id="ZFIN:ZDB-GENE-040801-238"/>
<dbReference type="CTD" id="84881"/>
<dbReference type="ZFIN" id="ZDB-GENE-040801-238">
    <property type="gene designation" value="rpusd4"/>
</dbReference>
<dbReference type="eggNOG" id="KOG1919">
    <property type="taxonomic scope" value="Eukaryota"/>
</dbReference>
<dbReference type="HOGENOM" id="CLU_016902_2_1_1"/>
<dbReference type="InParanoid" id="Q6DBR0"/>
<dbReference type="OMA" id="HSECRTI"/>
<dbReference type="OrthoDB" id="428658at2759"/>
<dbReference type="PhylomeDB" id="Q6DBR0"/>
<dbReference type="TreeFam" id="TF337899"/>
<dbReference type="PRO" id="PR:Q6DBR0"/>
<dbReference type="Proteomes" id="UP000000437">
    <property type="component" value="Alternate scaffold 11"/>
</dbReference>
<dbReference type="Proteomes" id="UP000000437">
    <property type="component" value="Chromosome 11"/>
</dbReference>
<dbReference type="Bgee" id="ENSDARG00000012674">
    <property type="expression patterns" value="Expressed in ovary and 22 other cell types or tissues"/>
</dbReference>
<dbReference type="GO" id="GO:0005759">
    <property type="term" value="C:mitochondrial matrix"/>
    <property type="evidence" value="ECO:0007669"/>
    <property type="project" value="UniProtKB-SubCell"/>
</dbReference>
<dbReference type="GO" id="GO:0005634">
    <property type="term" value="C:nucleus"/>
    <property type="evidence" value="ECO:0007669"/>
    <property type="project" value="UniProtKB-SubCell"/>
</dbReference>
<dbReference type="GO" id="GO:0003723">
    <property type="term" value="F:RNA binding"/>
    <property type="evidence" value="ECO:0007669"/>
    <property type="project" value="InterPro"/>
</dbReference>
<dbReference type="GO" id="GO:0106029">
    <property type="term" value="F:tRNA pseudouridine synthase activity"/>
    <property type="evidence" value="ECO:0007669"/>
    <property type="project" value="RHEA"/>
</dbReference>
<dbReference type="GO" id="GO:0006397">
    <property type="term" value="P:mRNA processing"/>
    <property type="evidence" value="ECO:0007669"/>
    <property type="project" value="UniProtKB-KW"/>
</dbReference>
<dbReference type="GO" id="GO:0001522">
    <property type="term" value="P:pseudouridine synthesis"/>
    <property type="evidence" value="ECO:0007669"/>
    <property type="project" value="InterPro"/>
</dbReference>
<dbReference type="GO" id="GO:0008380">
    <property type="term" value="P:RNA splicing"/>
    <property type="evidence" value="ECO:0007669"/>
    <property type="project" value="UniProtKB-KW"/>
</dbReference>
<dbReference type="GO" id="GO:0006364">
    <property type="term" value="P:rRNA processing"/>
    <property type="evidence" value="ECO:0007669"/>
    <property type="project" value="UniProtKB-KW"/>
</dbReference>
<dbReference type="GO" id="GO:0008033">
    <property type="term" value="P:tRNA processing"/>
    <property type="evidence" value="ECO:0007669"/>
    <property type="project" value="UniProtKB-KW"/>
</dbReference>
<dbReference type="CDD" id="cd02869">
    <property type="entry name" value="PseudoU_synth_RluA_like"/>
    <property type="match status" value="1"/>
</dbReference>
<dbReference type="FunFam" id="3.30.2350.10:FF:000015">
    <property type="entry name" value="Mitochondrial RNA pseudouridine synthase RPUSD4"/>
    <property type="match status" value="1"/>
</dbReference>
<dbReference type="Gene3D" id="3.30.2350.10">
    <property type="entry name" value="Pseudouridine synthase"/>
    <property type="match status" value="1"/>
</dbReference>
<dbReference type="InterPro" id="IPR020103">
    <property type="entry name" value="PsdUridine_synth_cat_dom_sf"/>
</dbReference>
<dbReference type="InterPro" id="IPR006145">
    <property type="entry name" value="PsdUridine_synth_RsuA/RluA"/>
</dbReference>
<dbReference type="InterPro" id="IPR050188">
    <property type="entry name" value="RluA_PseudoU_synthase"/>
</dbReference>
<dbReference type="PANTHER" id="PTHR21600">
    <property type="entry name" value="MITOCHONDRIAL RNA PSEUDOURIDINE SYNTHASE"/>
    <property type="match status" value="1"/>
</dbReference>
<dbReference type="PANTHER" id="PTHR21600:SF83">
    <property type="entry name" value="PSEUDOURIDYLATE SYNTHASE RPUSD4, MITOCHONDRIAL"/>
    <property type="match status" value="1"/>
</dbReference>
<dbReference type="Pfam" id="PF00849">
    <property type="entry name" value="PseudoU_synth_2"/>
    <property type="match status" value="1"/>
</dbReference>
<dbReference type="SUPFAM" id="SSF55120">
    <property type="entry name" value="Pseudouridine synthase"/>
    <property type="match status" value="1"/>
</dbReference>
<name>RUSD4_DANRE</name>
<gene>
    <name evidence="1" type="primary">rpusd4</name>
    <name evidence="3" type="ORF">zgc:92006</name>
</gene>
<organism>
    <name type="scientific">Danio rerio</name>
    <name type="common">Zebrafish</name>
    <name type="synonym">Brachydanio rerio</name>
    <dbReference type="NCBI Taxonomy" id="7955"/>
    <lineage>
        <taxon>Eukaryota</taxon>
        <taxon>Metazoa</taxon>
        <taxon>Chordata</taxon>
        <taxon>Craniata</taxon>
        <taxon>Vertebrata</taxon>
        <taxon>Euteleostomi</taxon>
        <taxon>Actinopterygii</taxon>
        <taxon>Neopterygii</taxon>
        <taxon>Teleostei</taxon>
        <taxon>Ostariophysi</taxon>
        <taxon>Cypriniformes</taxon>
        <taxon>Danionidae</taxon>
        <taxon>Danioninae</taxon>
        <taxon>Danio</taxon>
    </lineage>
</organism>